<gene>
    <name evidence="1" type="primary">rplF</name>
    <name type="ordered locus">Rfer_4228</name>
</gene>
<dbReference type="EMBL" id="CP000267">
    <property type="protein sequence ID" value="ABD71915.1"/>
    <property type="molecule type" value="Genomic_DNA"/>
</dbReference>
<dbReference type="RefSeq" id="WP_011466472.1">
    <property type="nucleotide sequence ID" value="NC_007908.1"/>
</dbReference>
<dbReference type="SMR" id="Q21QN8"/>
<dbReference type="STRING" id="338969.Rfer_4228"/>
<dbReference type="KEGG" id="rfr:Rfer_4228"/>
<dbReference type="eggNOG" id="COG0097">
    <property type="taxonomic scope" value="Bacteria"/>
</dbReference>
<dbReference type="HOGENOM" id="CLU_065464_1_2_4"/>
<dbReference type="OrthoDB" id="9805007at2"/>
<dbReference type="Proteomes" id="UP000008332">
    <property type="component" value="Chromosome"/>
</dbReference>
<dbReference type="GO" id="GO:0022625">
    <property type="term" value="C:cytosolic large ribosomal subunit"/>
    <property type="evidence" value="ECO:0007669"/>
    <property type="project" value="TreeGrafter"/>
</dbReference>
<dbReference type="GO" id="GO:0019843">
    <property type="term" value="F:rRNA binding"/>
    <property type="evidence" value="ECO:0007669"/>
    <property type="project" value="UniProtKB-UniRule"/>
</dbReference>
<dbReference type="GO" id="GO:0003735">
    <property type="term" value="F:structural constituent of ribosome"/>
    <property type="evidence" value="ECO:0007669"/>
    <property type="project" value="InterPro"/>
</dbReference>
<dbReference type="GO" id="GO:0002181">
    <property type="term" value="P:cytoplasmic translation"/>
    <property type="evidence" value="ECO:0007669"/>
    <property type="project" value="TreeGrafter"/>
</dbReference>
<dbReference type="FunFam" id="3.90.930.12:FF:000001">
    <property type="entry name" value="50S ribosomal protein L6"/>
    <property type="match status" value="1"/>
</dbReference>
<dbReference type="FunFam" id="3.90.930.12:FF:000002">
    <property type="entry name" value="50S ribosomal protein L6"/>
    <property type="match status" value="1"/>
</dbReference>
<dbReference type="Gene3D" id="3.90.930.12">
    <property type="entry name" value="Ribosomal protein L6, alpha-beta domain"/>
    <property type="match status" value="2"/>
</dbReference>
<dbReference type="HAMAP" id="MF_01365_B">
    <property type="entry name" value="Ribosomal_uL6_B"/>
    <property type="match status" value="1"/>
</dbReference>
<dbReference type="InterPro" id="IPR000702">
    <property type="entry name" value="Ribosomal_uL6-like"/>
</dbReference>
<dbReference type="InterPro" id="IPR036789">
    <property type="entry name" value="Ribosomal_uL6-like_a/b-dom_sf"/>
</dbReference>
<dbReference type="InterPro" id="IPR020040">
    <property type="entry name" value="Ribosomal_uL6_a/b-dom"/>
</dbReference>
<dbReference type="InterPro" id="IPR019906">
    <property type="entry name" value="Ribosomal_uL6_bac-type"/>
</dbReference>
<dbReference type="InterPro" id="IPR002358">
    <property type="entry name" value="Ribosomal_uL6_CS"/>
</dbReference>
<dbReference type="NCBIfam" id="TIGR03654">
    <property type="entry name" value="L6_bact"/>
    <property type="match status" value="1"/>
</dbReference>
<dbReference type="PANTHER" id="PTHR11655">
    <property type="entry name" value="60S/50S RIBOSOMAL PROTEIN L6/L9"/>
    <property type="match status" value="1"/>
</dbReference>
<dbReference type="PANTHER" id="PTHR11655:SF14">
    <property type="entry name" value="LARGE RIBOSOMAL SUBUNIT PROTEIN UL6M"/>
    <property type="match status" value="1"/>
</dbReference>
<dbReference type="Pfam" id="PF00347">
    <property type="entry name" value="Ribosomal_L6"/>
    <property type="match status" value="2"/>
</dbReference>
<dbReference type="PIRSF" id="PIRSF002162">
    <property type="entry name" value="Ribosomal_L6"/>
    <property type="match status" value="1"/>
</dbReference>
<dbReference type="PRINTS" id="PR00059">
    <property type="entry name" value="RIBOSOMALL6"/>
</dbReference>
<dbReference type="SUPFAM" id="SSF56053">
    <property type="entry name" value="Ribosomal protein L6"/>
    <property type="match status" value="2"/>
</dbReference>
<dbReference type="PROSITE" id="PS00525">
    <property type="entry name" value="RIBOSOMAL_L6_1"/>
    <property type="match status" value="1"/>
</dbReference>
<proteinExistence type="inferred from homology"/>
<protein>
    <recommendedName>
        <fullName evidence="1">Large ribosomal subunit protein uL6</fullName>
    </recommendedName>
    <alternativeName>
        <fullName evidence="2">50S ribosomal protein L6</fullName>
    </alternativeName>
</protein>
<reference key="1">
    <citation type="submission" date="2006-02" db="EMBL/GenBank/DDBJ databases">
        <title>Complete sequence of chromosome of Rhodoferax ferrireducens DSM 15236.</title>
        <authorList>
            <person name="Copeland A."/>
            <person name="Lucas S."/>
            <person name="Lapidus A."/>
            <person name="Barry K."/>
            <person name="Detter J.C."/>
            <person name="Glavina del Rio T."/>
            <person name="Hammon N."/>
            <person name="Israni S."/>
            <person name="Pitluck S."/>
            <person name="Brettin T."/>
            <person name="Bruce D."/>
            <person name="Han C."/>
            <person name="Tapia R."/>
            <person name="Gilna P."/>
            <person name="Kiss H."/>
            <person name="Schmutz J."/>
            <person name="Larimer F."/>
            <person name="Land M."/>
            <person name="Kyrpides N."/>
            <person name="Ivanova N."/>
            <person name="Richardson P."/>
        </authorList>
    </citation>
    <scope>NUCLEOTIDE SEQUENCE [LARGE SCALE GENOMIC DNA]</scope>
    <source>
        <strain>ATCC BAA-621 / DSM 15236 / T118</strain>
    </source>
</reference>
<name>RL6_ALBFT</name>
<feature type="chain" id="PRO_0000265285" description="Large ribosomal subunit protein uL6">
    <location>
        <begin position="1"/>
        <end position="177"/>
    </location>
</feature>
<organism>
    <name type="scientific">Albidiferax ferrireducens (strain ATCC BAA-621 / DSM 15236 / T118)</name>
    <name type="common">Rhodoferax ferrireducens</name>
    <dbReference type="NCBI Taxonomy" id="338969"/>
    <lineage>
        <taxon>Bacteria</taxon>
        <taxon>Pseudomonadati</taxon>
        <taxon>Pseudomonadota</taxon>
        <taxon>Betaproteobacteria</taxon>
        <taxon>Burkholderiales</taxon>
        <taxon>Comamonadaceae</taxon>
        <taxon>Rhodoferax</taxon>
    </lineage>
</organism>
<evidence type="ECO:0000255" key="1">
    <source>
        <dbReference type="HAMAP-Rule" id="MF_01365"/>
    </source>
</evidence>
<evidence type="ECO:0000305" key="2"/>
<accession>Q21QN8</accession>
<comment type="function">
    <text evidence="1">This protein binds to the 23S rRNA, and is important in its secondary structure. It is located near the subunit interface in the base of the L7/L12 stalk, and near the tRNA binding site of the peptidyltransferase center.</text>
</comment>
<comment type="subunit">
    <text evidence="1">Part of the 50S ribosomal subunit.</text>
</comment>
<comment type="similarity">
    <text evidence="1">Belongs to the universal ribosomal protein uL6 family.</text>
</comment>
<sequence length="177" mass="18761">MSRIGKMPVAVPAGVDVLVKDDQISVKGAGGSLFLTQNALVKVSSDAGALSFQPANDSREANAMSGTMRQLVNNMVVGVTKGFEKKLNLVGVGYKAQAQGAKLNLTVGYSHPVNKDMPAGITVATPTPTEIVIKGADRQRVGQVAAEIRAIRPPEPYKGKGIRYSDEKITIKETKKK</sequence>
<keyword id="KW-1185">Reference proteome</keyword>
<keyword id="KW-0687">Ribonucleoprotein</keyword>
<keyword id="KW-0689">Ribosomal protein</keyword>
<keyword id="KW-0694">RNA-binding</keyword>
<keyword id="KW-0699">rRNA-binding</keyword>